<proteinExistence type="inferred from homology"/>
<organism>
    <name type="scientific">Pseudomonas aeruginosa (strain ATCC 15692 / DSM 22644 / CIP 104116 / JCM 14847 / LMG 12228 / 1C / PRS 101 / PAO1)</name>
    <dbReference type="NCBI Taxonomy" id="208964"/>
    <lineage>
        <taxon>Bacteria</taxon>
        <taxon>Pseudomonadati</taxon>
        <taxon>Pseudomonadota</taxon>
        <taxon>Gammaproteobacteria</taxon>
        <taxon>Pseudomonadales</taxon>
        <taxon>Pseudomonadaceae</taxon>
        <taxon>Pseudomonas</taxon>
    </lineage>
</organism>
<keyword id="KW-0997">Cell inner membrane</keyword>
<keyword id="KW-1003">Cell membrane</keyword>
<keyword id="KW-0201">Cytochrome c-type biogenesis</keyword>
<keyword id="KW-1015">Disulfide bond</keyword>
<keyword id="KW-0249">Electron transport</keyword>
<keyword id="KW-0472">Membrane</keyword>
<keyword id="KW-0520">NAD</keyword>
<keyword id="KW-0560">Oxidoreductase</keyword>
<keyword id="KW-0676">Redox-active center</keyword>
<keyword id="KW-1185">Reference proteome</keyword>
<keyword id="KW-0732">Signal</keyword>
<keyword id="KW-0812">Transmembrane</keyword>
<keyword id="KW-1133">Transmembrane helix</keyword>
<keyword id="KW-0813">Transport</keyword>
<reference key="1">
    <citation type="journal article" date="2000" name="Nature">
        <title>Complete genome sequence of Pseudomonas aeruginosa PAO1, an opportunistic pathogen.</title>
        <authorList>
            <person name="Stover C.K."/>
            <person name="Pham X.-Q.T."/>
            <person name="Erwin A.L."/>
            <person name="Mizoguchi S.D."/>
            <person name="Warrener P."/>
            <person name="Hickey M.J."/>
            <person name="Brinkman F.S.L."/>
            <person name="Hufnagle W.O."/>
            <person name="Kowalik D.J."/>
            <person name="Lagrou M."/>
            <person name="Garber R.L."/>
            <person name="Goltry L."/>
            <person name="Tolentino E."/>
            <person name="Westbrock-Wadman S."/>
            <person name="Yuan Y."/>
            <person name="Brody L.L."/>
            <person name="Coulter S.N."/>
            <person name="Folger K.R."/>
            <person name="Kas A."/>
            <person name="Larbig K."/>
            <person name="Lim R.M."/>
            <person name="Smith K.A."/>
            <person name="Spencer D.H."/>
            <person name="Wong G.K.-S."/>
            <person name="Wu Z."/>
            <person name="Paulsen I.T."/>
            <person name="Reizer J."/>
            <person name="Saier M.H. Jr."/>
            <person name="Hancock R.E.W."/>
            <person name="Lory S."/>
            <person name="Olson M.V."/>
        </authorList>
    </citation>
    <scope>NUCLEOTIDE SEQUENCE [LARGE SCALE GENOMIC DNA]</scope>
    <source>
        <strain>ATCC 15692 / DSM 22644 / CIP 104116 / JCM 14847 / LMG 12228 / 1C / PRS 101 / PAO1</strain>
    </source>
</reference>
<feature type="signal peptide" evidence="2">
    <location>
        <begin position="1"/>
        <end position="18"/>
    </location>
</feature>
<feature type="chain" id="PRO_0000007382" description="Thiol:disulfide interchange protein DsbD 2">
    <location>
        <begin position="19"/>
        <end position="587"/>
    </location>
</feature>
<feature type="topological domain" description="Periplasmic" evidence="1">
    <location>
        <begin position="19"/>
        <end position="172"/>
    </location>
</feature>
<feature type="transmembrane region" description="Helical" evidence="2">
    <location>
        <begin position="173"/>
        <end position="193"/>
    </location>
</feature>
<feature type="topological domain" description="Cytoplasmic" evidence="1">
    <location>
        <begin position="194"/>
        <end position="216"/>
    </location>
</feature>
<feature type="transmembrane region" description="Helical" evidence="2">
    <location>
        <begin position="217"/>
        <end position="237"/>
    </location>
</feature>
<feature type="topological domain" description="Periplasmic" evidence="1">
    <location>
        <begin position="238"/>
        <end position="246"/>
    </location>
</feature>
<feature type="transmembrane region" description="Helical" evidence="2">
    <location>
        <begin position="247"/>
        <end position="267"/>
    </location>
</feature>
<feature type="topological domain" description="Cytoplasmic" evidence="1">
    <location>
        <begin position="268"/>
        <end position="299"/>
    </location>
</feature>
<feature type="transmembrane region" description="Helical" evidence="2">
    <location>
        <begin position="300"/>
        <end position="320"/>
    </location>
</feature>
<feature type="topological domain" description="Periplasmic" evidence="1">
    <location>
        <begin position="321"/>
        <end position="330"/>
    </location>
</feature>
<feature type="transmembrane region" description="Helical" evidence="2">
    <location>
        <begin position="331"/>
        <end position="351"/>
    </location>
</feature>
<feature type="topological domain" description="Cytoplasmic" evidence="1">
    <location>
        <begin position="352"/>
        <end position="360"/>
    </location>
</feature>
<feature type="transmembrane region" description="Helical" evidence="2">
    <location>
        <begin position="361"/>
        <end position="381"/>
    </location>
</feature>
<feature type="topological domain" description="Periplasmic" evidence="1">
    <location>
        <begin position="382"/>
        <end position="383"/>
    </location>
</feature>
<feature type="transmembrane region" description="Helical" evidence="2">
    <location>
        <begin position="384"/>
        <end position="404"/>
    </location>
</feature>
<feature type="topological domain" description="Cytoplasmic" evidence="1">
    <location>
        <begin position="405"/>
        <end position="416"/>
    </location>
</feature>
<feature type="transmembrane region" description="Helical" evidence="2">
    <location>
        <begin position="417"/>
        <end position="437"/>
    </location>
</feature>
<feature type="topological domain" description="Periplasmic" evidence="1">
    <location>
        <begin position="438"/>
        <end position="587"/>
    </location>
</feature>
<feature type="domain" description="Thioredoxin" evidence="2">
    <location>
        <begin position="448"/>
        <end position="585"/>
    </location>
</feature>
<feature type="disulfide bond" description="Redox-active" evidence="2">
    <location>
        <begin position="124"/>
        <end position="130"/>
    </location>
</feature>
<feature type="disulfide bond" description="Redox-active" evidence="2">
    <location>
        <begin position="188"/>
        <end position="308"/>
    </location>
</feature>
<feature type="disulfide bond" description="Redox-active" evidence="2">
    <location>
        <begin position="500"/>
        <end position="503"/>
    </location>
</feature>
<gene>
    <name evidence="2" type="primary">dsbD2</name>
    <name type="ordered locus">PA2478</name>
</gene>
<sequence length="587" mass="62093">MRVLILLLMLLLPGLSQAQPGDDLFAPRGATQTDFLPVEKAFRFTWERLDDGQVQLRWQIAPGYYLYQKRLRFDGLDPALQPQLPPGESHSDEFFGESQVYRQSLELTLPAAAAGQLRLGWQGCADAGLCYPPQSQALDLGGTGPAAAGTSGEVAEDQGLAGSLQAGNLAWSLLLFFGLGLLLAFAPCSLPMLPILAGLVVGSGAGPRRGLLLAGSYVLSMALVYAGLGVVAALLGGNLQAWLQQPWLLGSFAALFVFLALPMFGFFELQLPAALRDRLDGLSRGRKGGSLAGAAALGALSGLLVGPCMTAPLAGALLYIAQTGNALHGGLVLFSLGLGIGMPLLLLVTVGSRFLPKPGPWMNLVKGVFGFLFLGTAWILLRPLLGEALWIGLGGALLLVLAYAALHTARGLARHAVLFGAAGCIFGLWGAAMLLGAAAGADDPWRPLQVYAAANRGATPTASAHEAFLTVSQPAELDRQLAAAKAEGQWVLLDYYADWCVSCRIMEKQVFAKPDVLAALQGVRLLRLDVTADNAASRELLHRYQVPGPPSLIWIGPEGEERRARRLTGEVDAGGFLAHWQATRERG</sequence>
<comment type="function">
    <text evidence="2">Required to facilitate the formation of correct disulfide bonds in some periplasmic proteins and for the assembly of the periplasmic c-type cytochromes. Acts by transferring electrons from cytoplasmic thioredoxin to the periplasm. This transfer involves a cascade of disulfide bond formation and reduction steps.</text>
</comment>
<comment type="catalytic activity">
    <reaction evidence="2">
        <text>[protein]-dithiol + NAD(+) = [protein]-disulfide + NADH + H(+)</text>
        <dbReference type="Rhea" id="RHEA:18749"/>
        <dbReference type="Rhea" id="RHEA-COMP:10593"/>
        <dbReference type="Rhea" id="RHEA-COMP:10594"/>
        <dbReference type="ChEBI" id="CHEBI:15378"/>
        <dbReference type="ChEBI" id="CHEBI:29950"/>
        <dbReference type="ChEBI" id="CHEBI:50058"/>
        <dbReference type="ChEBI" id="CHEBI:57540"/>
        <dbReference type="ChEBI" id="CHEBI:57945"/>
        <dbReference type="EC" id="1.8.1.8"/>
    </reaction>
</comment>
<comment type="catalytic activity">
    <reaction evidence="2">
        <text>[protein]-dithiol + NADP(+) = [protein]-disulfide + NADPH + H(+)</text>
        <dbReference type="Rhea" id="RHEA:18753"/>
        <dbReference type="Rhea" id="RHEA-COMP:10593"/>
        <dbReference type="Rhea" id="RHEA-COMP:10594"/>
        <dbReference type="ChEBI" id="CHEBI:15378"/>
        <dbReference type="ChEBI" id="CHEBI:29950"/>
        <dbReference type="ChEBI" id="CHEBI:50058"/>
        <dbReference type="ChEBI" id="CHEBI:57783"/>
        <dbReference type="ChEBI" id="CHEBI:58349"/>
        <dbReference type="EC" id="1.8.1.8"/>
    </reaction>
</comment>
<comment type="subcellular location">
    <subcellularLocation>
        <location evidence="2">Cell inner membrane</location>
        <topology evidence="2">Multi-pass membrane protein</topology>
    </subcellularLocation>
</comment>
<comment type="similarity">
    <text evidence="2">Belongs to the thioredoxin family. DsbD subfamily.</text>
</comment>
<dbReference type="EC" id="1.8.1.8" evidence="2"/>
<dbReference type="EMBL" id="AE004091">
    <property type="protein sequence ID" value="AAG05866.1"/>
    <property type="molecule type" value="Genomic_DNA"/>
</dbReference>
<dbReference type="PIR" id="F83336">
    <property type="entry name" value="F83336"/>
</dbReference>
<dbReference type="RefSeq" id="NP_251168.1">
    <property type="nucleotide sequence ID" value="NC_002516.2"/>
</dbReference>
<dbReference type="SMR" id="Q9I104"/>
<dbReference type="FunCoup" id="Q9I104">
    <property type="interactions" value="121"/>
</dbReference>
<dbReference type="STRING" id="208964.PA2478"/>
<dbReference type="PaxDb" id="208964-PA2478"/>
<dbReference type="GeneID" id="882175"/>
<dbReference type="KEGG" id="pae:PA2478"/>
<dbReference type="PATRIC" id="fig|208964.12.peg.2589"/>
<dbReference type="PseudoCAP" id="PA2478"/>
<dbReference type="HOGENOM" id="CLU_014657_3_0_6"/>
<dbReference type="InParanoid" id="Q9I104"/>
<dbReference type="OrthoDB" id="9811036at2"/>
<dbReference type="PhylomeDB" id="Q9I104"/>
<dbReference type="BioCyc" id="PAER208964:G1FZ6-2513-MONOMER"/>
<dbReference type="Proteomes" id="UP000002438">
    <property type="component" value="Chromosome"/>
</dbReference>
<dbReference type="GO" id="GO:0005886">
    <property type="term" value="C:plasma membrane"/>
    <property type="evidence" value="ECO:0007669"/>
    <property type="project" value="UniProtKB-SubCell"/>
</dbReference>
<dbReference type="GO" id="GO:0009055">
    <property type="term" value="F:electron transfer activity"/>
    <property type="evidence" value="ECO:0007669"/>
    <property type="project" value="UniProtKB-UniRule"/>
</dbReference>
<dbReference type="GO" id="GO:0047134">
    <property type="term" value="F:protein-disulfide reductase [NAD(P)H] activity"/>
    <property type="evidence" value="ECO:0007669"/>
    <property type="project" value="UniProtKB-UniRule"/>
</dbReference>
<dbReference type="GO" id="GO:0015035">
    <property type="term" value="F:protein-disulfide reductase activity"/>
    <property type="evidence" value="ECO:0000318"/>
    <property type="project" value="GO_Central"/>
</dbReference>
<dbReference type="GO" id="GO:0045454">
    <property type="term" value="P:cell redox homeostasis"/>
    <property type="evidence" value="ECO:0000318"/>
    <property type="project" value="GO_Central"/>
</dbReference>
<dbReference type="GO" id="GO:0017004">
    <property type="term" value="P:cytochrome complex assembly"/>
    <property type="evidence" value="ECO:0007669"/>
    <property type="project" value="UniProtKB-UniRule"/>
</dbReference>
<dbReference type="CDD" id="cd02953">
    <property type="entry name" value="DsbDgamma"/>
    <property type="match status" value="1"/>
</dbReference>
<dbReference type="Gene3D" id="3.40.30.10">
    <property type="entry name" value="Glutaredoxin"/>
    <property type="match status" value="1"/>
</dbReference>
<dbReference type="Gene3D" id="2.60.40.1250">
    <property type="entry name" value="Thiol:disulfide interchange protein DsbD, N-terminal domain"/>
    <property type="match status" value="1"/>
</dbReference>
<dbReference type="HAMAP" id="MF_00399">
    <property type="entry name" value="DbsD"/>
    <property type="match status" value="1"/>
</dbReference>
<dbReference type="InterPro" id="IPR003834">
    <property type="entry name" value="Cyt_c_assmbl_TM_dom"/>
</dbReference>
<dbReference type="InterPro" id="IPR035671">
    <property type="entry name" value="DsbD_gamma"/>
</dbReference>
<dbReference type="InterPro" id="IPR028250">
    <property type="entry name" value="DsbDN"/>
</dbReference>
<dbReference type="InterPro" id="IPR036929">
    <property type="entry name" value="DsbDN_sf"/>
</dbReference>
<dbReference type="InterPro" id="IPR022910">
    <property type="entry name" value="Thiol_diS_interchange_DbsD"/>
</dbReference>
<dbReference type="InterPro" id="IPR036249">
    <property type="entry name" value="Thioredoxin-like_sf"/>
</dbReference>
<dbReference type="InterPro" id="IPR017937">
    <property type="entry name" value="Thioredoxin_CS"/>
</dbReference>
<dbReference type="InterPro" id="IPR013766">
    <property type="entry name" value="Thioredoxin_domain"/>
</dbReference>
<dbReference type="NCBIfam" id="NF001419">
    <property type="entry name" value="PRK00293.1"/>
    <property type="match status" value="1"/>
</dbReference>
<dbReference type="PANTHER" id="PTHR32234">
    <property type="entry name" value="THIOL:DISULFIDE INTERCHANGE PROTEIN DSBD"/>
    <property type="match status" value="1"/>
</dbReference>
<dbReference type="PANTHER" id="PTHR32234:SF0">
    <property type="entry name" value="THIOL:DISULFIDE INTERCHANGE PROTEIN DSBD"/>
    <property type="match status" value="1"/>
</dbReference>
<dbReference type="Pfam" id="PF11412">
    <property type="entry name" value="DsbD_N"/>
    <property type="match status" value="1"/>
</dbReference>
<dbReference type="Pfam" id="PF02683">
    <property type="entry name" value="DsbD_TM"/>
    <property type="match status" value="1"/>
</dbReference>
<dbReference type="Pfam" id="PF13899">
    <property type="entry name" value="Thioredoxin_7"/>
    <property type="match status" value="1"/>
</dbReference>
<dbReference type="SUPFAM" id="SSF74863">
    <property type="entry name" value="Thiol:disulfide interchange protein DsbD, N-terminal domain (DsbD-alpha)"/>
    <property type="match status" value="1"/>
</dbReference>
<dbReference type="SUPFAM" id="SSF52833">
    <property type="entry name" value="Thioredoxin-like"/>
    <property type="match status" value="1"/>
</dbReference>
<dbReference type="PROSITE" id="PS00194">
    <property type="entry name" value="THIOREDOXIN_1"/>
    <property type="match status" value="1"/>
</dbReference>
<dbReference type="PROSITE" id="PS51352">
    <property type="entry name" value="THIOREDOXIN_2"/>
    <property type="match status" value="1"/>
</dbReference>
<evidence type="ECO:0000255" key="1"/>
<evidence type="ECO:0000255" key="2">
    <source>
        <dbReference type="HAMAP-Rule" id="MF_00399"/>
    </source>
</evidence>
<name>DSBD2_PSEAE</name>
<protein>
    <recommendedName>
        <fullName evidence="2">Thiol:disulfide interchange protein DsbD 2</fullName>
        <ecNumber evidence="2">1.8.1.8</ecNumber>
    </recommendedName>
    <alternativeName>
        <fullName evidence="2">Protein-disulfide reductase 2</fullName>
        <shortName evidence="2">Disulfide reductase 2</shortName>
    </alternativeName>
</protein>
<accession>Q9I104</accession>